<protein>
    <recommendedName>
        <fullName evidence="1">Transcription elongation factor GreA</fullName>
    </recommendedName>
    <alternativeName>
        <fullName evidence="1">Transcript cleavage factor GreA</fullName>
    </alternativeName>
</protein>
<gene>
    <name evidence="1" type="primary">greA</name>
    <name type="ordered locus">MYCGA1920</name>
    <name type="ORF">MGA_0958</name>
</gene>
<dbReference type="EMBL" id="AE015450">
    <property type="protein sequence ID" value="AAP56542.1"/>
    <property type="molecule type" value="Genomic_DNA"/>
</dbReference>
<dbReference type="RefSeq" id="WP_011113424.1">
    <property type="nucleotide sequence ID" value="NC_004829.2"/>
</dbReference>
<dbReference type="SMR" id="Q7NBS1"/>
<dbReference type="GeneID" id="93510021"/>
<dbReference type="KEGG" id="mga:MGA_0958"/>
<dbReference type="HOGENOM" id="CLU_101379_2_1_14"/>
<dbReference type="OrthoDB" id="9808774at2"/>
<dbReference type="Proteomes" id="UP000001418">
    <property type="component" value="Chromosome"/>
</dbReference>
<dbReference type="GO" id="GO:0003677">
    <property type="term" value="F:DNA binding"/>
    <property type="evidence" value="ECO:0007669"/>
    <property type="project" value="UniProtKB-UniRule"/>
</dbReference>
<dbReference type="GO" id="GO:0070063">
    <property type="term" value="F:RNA polymerase binding"/>
    <property type="evidence" value="ECO:0007669"/>
    <property type="project" value="InterPro"/>
</dbReference>
<dbReference type="GO" id="GO:0006354">
    <property type="term" value="P:DNA-templated transcription elongation"/>
    <property type="evidence" value="ECO:0007669"/>
    <property type="project" value="TreeGrafter"/>
</dbReference>
<dbReference type="GO" id="GO:0032784">
    <property type="term" value="P:regulation of DNA-templated transcription elongation"/>
    <property type="evidence" value="ECO:0007669"/>
    <property type="project" value="UniProtKB-UniRule"/>
</dbReference>
<dbReference type="FunFam" id="1.10.287.180:FF:000001">
    <property type="entry name" value="Transcription elongation factor GreA"/>
    <property type="match status" value="1"/>
</dbReference>
<dbReference type="Gene3D" id="3.10.50.30">
    <property type="entry name" value="Transcription elongation factor, GreA/GreB, C-terminal domain"/>
    <property type="match status" value="1"/>
</dbReference>
<dbReference type="Gene3D" id="1.10.287.180">
    <property type="entry name" value="Transcription elongation factor, GreA/GreB, N-terminal domain"/>
    <property type="match status" value="1"/>
</dbReference>
<dbReference type="HAMAP" id="MF_00105">
    <property type="entry name" value="GreA_GreB"/>
    <property type="match status" value="1"/>
</dbReference>
<dbReference type="InterPro" id="IPR036953">
    <property type="entry name" value="GreA/GreB_C_sf"/>
</dbReference>
<dbReference type="InterPro" id="IPR018151">
    <property type="entry name" value="TF_GreA/GreB_CS"/>
</dbReference>
<dbReference type="InterPro" id="IPR006359">
    <property type="entry name" value="Tscrpt_elong_fac_GreA"/>
</dbReference>
<dbReference type="InterPro" id="IPR028624">
    <property type="entry name" value="Tscrpt_elong_fac_GreA/B"/>
</dbReference>
<dbReference type="InterPro" id="IPR001437">
    <property type="entry name" value="Tscrpt_elong_fac_GreA/B_C"/>
</dbReference>
<dbReference type="InterPro" id="IPR023459">
    <property type="entry name" value="Tscrpt_elong_fac_GreA/B_fam"/>
</dbReference>
<dbReference type="InterPro" id="IPR022691">
    <property type="entry name" value="Tscrpt_elong_fac_GreA/B_N"/>
</dbReference>
<dbReference type="InterPro" id="IPR036805">
    <property type="entry name" value="Tscrpt_elong_fac_GreA/B_N_sf"/>
</dbReference>
<dbReference type="NCBIfam" id="TIGR01462">
    <property type="entry name" value="greA"/>
    <property type="match status" value="1"/>
</dbReference>
<dbReference type="NCBIfam" id="NF001263">
    <property type="entry name" value="PRK00226.1-4"/>
    <property type="match status" value="1"/>
</dbReference>
<dbReference type="PANTHER" id="PTHR30437">
    <property type="entry name" value="TRANSCRIPTION ELONGATION FACTOR GREA"/>
    <property type="match status" value="1"/>
</dbReference>
<dbReference type="PANTHER" id="PTHR30437:SF4">
    <property type="entry name" value="TRANSCRIPTION ELONGATION FACTOR GREA"/>
    <property type="match status" value="1"/>
</dbReference>
<dbReference type="Pfam" id="PF01272">
    <property type="entry name" value="GreA_GreB"/>
    <property type="match status" value="1"/>
</dbReference>
<dbReference type="Pfam" id="PF03449">
    <property type="entry name" value="GreA_GreB_N"/>
    <property type="match status" value="1"/>
</dbReference>
<dbReference type="PIRSF" id="PIRSF006092">
    <property type="entry name" value="GreA_GreB"/>
    <property type="match status" value="1"/>
</dbReference>
<dbReference type="SUPFAM" id="SSF54534">
    <property type="entry name" value="FKBP-like"/>
    <property type="match status" value="1"/>
</dbReference>
<dbReference type="SUPFAM" id="SSF46557">
    <property type="entry name" value="GreA transcript cleavage protein, N-terminal domain"/>
    <property type="match status" value="1"/>
</dbReference>
<dbReference type="PROSITE" id="PS00829">
    <property type="entry name" value="GREAB_1"/>
    <property type="match status" value="1"/>
</dbReference>
<sequence>MAKTKKHLLTQEGLKKLQAELRLLVDVKRADVIKLIQEAREQGDLSENADYDSAKATQSEIESRITEIQDILNHYEIIKEVDTKNKRVIVGAKVTIHDHSDECNYTYEIVGPIESDPAENKISHESPVAKAIMDKKEGESAEVIGIEHPYKVTIKKIVL</sequence>
<accession>Q7NBS1</accession>
<feature type="chain" id="PRO_1000075877" description="Transcription elongation factor GreA">
    <location>
        <begin position="1"/>
        <end position="159"/>
    </location>
</feature>
<comment type="function">
    <text evidence="1">Necessary for efficient RNA polymerase transcription elongation past template-encoded arresting sites. The arresting sites in DNA have the property of trapping a certain fraction of elongating RNA polymerases that pass through, resulting in locked ternary complexes. Cleavage of the nascent transcript by cleavage factors such as GreA or GreB allows the resumption of elongation from the new 3'terminus. GreA releases sequences of 2 to 3 nucleotides.</text>
</comment>
<comment type="similarity">
    <text evidence="1">Belongs to the GreA/GreB family.</text>
</comment>
<evidence type="ECO:0000255" key="1">
    <source>
        <dbReference type="HAMAP-Rule" id="MF_00105"/>
    </source>
</evidence>
<keyword id="KW-0238">DNA-binding</keyword>
<keyword id="KW-1185">Reference proteome</keyword>
<keyword id="KW-0804">Transcription</keyword>
<keyword id="KW-0805">Transcription regulation</keyword>
<organism>
    <name type="scientific">Mycoplasmoides gallisepticum (strain R(low / passage 15 / clone 2))</name>
    <name type="common">Mycoplasma gallisepticum</name>
    <dbReference type="NCBI Taxonomy" id="710127"/>
    <lineage>
        <taxon>Bacteria</taxon>
        <taxon>Bacillati</taxon>
        <taxon>Mycoplasmatota</taxon>
        <taxon>Mycoplasmoidales</taxon>
        <taxon>Mycoplasmoidaceae</taxon>
        <taxon>Mycoplasmoides</taxon>
    </lineage>
</organism>
<proteinExistence type="inferred from homology"/>
<reference key="1">
    <citation type="journal article" date="2003" name="Microbiology">
        <title>The complete genome sequence of the avian pathogen Mycoplasma gallisepticum strain R(low).</title>
        <authorList>
            <person name="Papazisi L."/>
            <person name="Gorton T.S."/>
            <person name="Kutish G."/>
            <person name="Markham P.F."/>
            <person name="Browning G.F."/>
            <person name="Nguyen D.K."/>
            <person name="Swartzell S."/>
            <person name="Madan A."/>
            <person name="Mahairas G."/>
            <person name="Geary S.J."/>
        </authorList>
    </citation>
    <scope>NUCLEOTIDE SEQUENCE [LARGE SCALE GENOMIC DNA]</scope>
    <source>
        <strain>R(low / passage 15 / clone 2)</strain>
    </source>
</reference>
<name>GREA_MYCGA</name>